<accession>P06312</accession>
<accession>P01625</accession>
<accession>P06313</accession>
<accession>P06314</accession>
<accession>P83593</accession>
<dbReference type="EMBL" id="Z00022">
    <property type="protein sequence ID" value="CAA77317.1"/>
    <property type="status" value="ALT_SEQ"/>
    <property type="molecule type" value="Genomic_DNA"/>
</dbReference>
<dbReference type="EMBL" id="Z00023">
    <property type="protein sequence ID" value="CAA77318.1"/>
    <property type="status" value="ALT_SEQ"/>
    <property type="molecule type" value="Genomic_DNA"/>
</dbReference>
<dbReference type="EMBL" id="X02990">
    <property type="protein sequence ID" value="CAA26733.1"/>
    <property type="status" value="ALT_SEQ"/>
    <property type="molecule type" value="mRNA"/>
</dbReference>
<dbReference type="EMBL" id="AC244205">
    <property type="status" value="NOT_ANNOTATED_CDS"/>
    <property type="molecule type" value="Genomic_DNA"/>
</dbReference>
<dbReference type="PIR" id="A01902">
    <property type="entry name" value="K4HU"/>
</dbReference>
<dbReference type="PIR" id="A01903">
    <property type="entry name" value="K4HULN"/>
</dbReference>
<dbReference type="PIR" id="A01904">
    <property type="entry name" value="K4HUJI"/>
</dbReference>
<dbReference type="PIR" id="A01905">
    <property type="entry name" value="K4HU17"/>
</dbReference>
<dbReference type="PIR" id="PH0869">
    <property type="entry name" value="PH0869"/>
</dbReference>
<dbReference type="PIR" id="S30523">
    <property type="entry name" value="S30523"/>
</dbReference>
<dbReference type="PIR" id="S34002">
    <property type="entry name" value="S34002"/>
</dbReference>
<dbReference type="PIR" id="S34003">
    <property type="entry name" value="S34003"/>
</dbReference>
<dbReference type="PDB" id="1EEQ">
    <property type="method" value="X-ray"/>
    <property type="resolution" value="1.50 A"/>
    <property type="chains" value="A/B=21-121"/>
</dbReference>
<dbReference type="PDB" id="1EEU">
    <property type="method" value="X-ray"/>
    <property type="resolution" value="1.60 A"/>
    <property type="chains" value="A/B=21-121"/>
</dbReference>
<dbReference type="PDB" id="1EFQ">
    <property type="method" value="X-ray"/>
    <property type="resolution" value="1.60 A"/>
    <property type="chains" value="A=21-121"/>
</dbReference>
<dbReference type="PDB" id="1EK3">
    <property type="method" value="X-ray"/>
    <property type="resolution" value="1.90 A"/>
    <property type="chains" value="A/B=21-121"/>
</dbReference>
<dbReference type="PDB" id="1LVE">
    <property type="method" value="X-ray"/>
    <property type="resolution" value="1.95 A"/>
    <property type="chains" value="A=21-121"/>
</dbReference>
<dbReference type="PDB" id="1QAC">
    <property type="method" value="X-ray"/>
    <property type="resolution" value="1.80 A"/>
    <property type="chains" value="A/B=21-121"/>
</dbReference>
<dbReference type="PDB" id="2LVE">
    <property type="method" value="X-ray"/>
    <property type="resolution" value="2.70 A"/>
    <property type="chains" value="A=21-121"/>
</dbReference>
<dbReference type="PDB" id="3LVE">
    <property type="method" value="X-ray"/>
    <property type="resolution" value="2.00 A"/>
    <property type="chains" value="A=21-121"/>
</dbReference>
<dbReference type="PDB" id="4LVE">
    <property type="method" value="X-ray"/>
    <property type="resolution" value="2.30 A"/>
    <property type="chains" value="A/B=21-121"/>
</dbReference>
<dbReference type="PDB" id="5LVE">
    <property type="method" value="X-ray"/>
    <property type="resolution" value="2.00 A"/>
    <property type="chains" value="A=21-121"/>
</dbReference>
<dbReference type="PDBsum" id="1EEQ"/>
<dbReference type="PDBsum" id="1EEU"/>
<dbReference type="PDBsum" id="1EFQ"/>
<dbReference type="PDBsum" id="1EK3"/>
<dbReference type="PDBsum" id="1LVE"/>
<dbReference type="PDBsum" id="1QAC"/>
<dbReference type="PDBsum" id="2LVE"/>
<dbReference type="PDBsum" id="3LVE"/>
<dbReference type="PDBsum" id="4LVE"/>
<dbReference type="PDBsum" id="5LVE"/>
<dbReference type="BMRB" id="P06312"/>
<dbReference type="EMDB" id="EMD-25471"/>
<dbReference type="EMDB" id="EMD-27703"/>
<dbReference type="EMDB" id="EMD-28199"/>
<dbReference type="EMDB" id="EMD-31624"/>
<dbReference type="EMDB" id="EMD-39194"/>
<dbReference type="EMDB" id="EMD-41089"/>
<dbReference type="SMR" id="P06312"/>
<dbReference type="FunCoup" id="P06312">
    <property type="interactions" value="398"/>
</dbReference>
<dbReference type="IntAct" id="P06312">
    <property type="interactions" value="3"/>
</dbReference>
<dbReference type="IMGT_GENE-DB" id="IGKV4-1"/>
<dbReference type="iPTMnet" id="P06312"/>
<dbReference type="PhosphoSitePlus" id="P06312"/>
<dbReference type="BioMuta" id="IGKV4-1"/>
<dbReference type="DMDM" id="31340182"/>
<dbReference type="jPOST" id="P06312"/>
<dbReference type="MassIVE" id="P06312"/>
<dbReference type="ProteomicsDB" id="51886"/>
<dbReference type="Ensembl" id="ENST00000390243.2">
    <property type="protein sequence ID" value="ENSP00000374778.2"/>
    <property type="gene ID" value="ENSG00000211598.2"/>
</dbReference>
<dbReference type="UCSC" id="uc061lqi.1">
    <property type="organism name" value="human"/>
</dbReference>
<dbReference type="AGR" id="HGNC:5834"/>
<dbReference type="GeneCards" id="IGKV4-1"/>
<dbReference type="HGNC" id="HGNC:5834">
    <property type="gene designation" value="IGKV4-1"/>
</dbReference>
<dbReference type="HPA" id="ENSG00000211598">
    <property type="expression patterns" value="Tissue enhanced (intestine, lymphoid tissue)"/>
</dbReference>
<dbReference type="neXtProt" id="NX_P06312"/>
<dbReference type="OpenTargets" id="ENSG00000211598"/>
<dbReference type="VEuPathDB" id="HostDB:ENSG00000211598"/>
<dbReference type="GeneTree" id="ENSGT00940000153094"/>
<dbReference type="HOGENOM" id="CLU_077975_4_1_1"/>
<dbReference type="InParanoid" id="P06312"/>
<dbReference type="OMA" id="SCFLCTQ"/>
<dbReference type="OrthoDB" id="9538307at2759"/>
<dbReference type="PAN-GO" id="P06312">
    <property type="GO annotations" value="3 GO annotations based on evolutionary models"/>
</dbReference>
<dbReference type="PhylomeDB" id="P06312"/>
<dbReference type="TreeFam" id="TF352067"/>
<dbReference type="PathwayCommons" id="P06312"/>
<dbReference type="Reactome" id="R-HSA-166663">
    <property type="pathway name" value="Initial triggering of complement"/>
</dbReference>
<dbReference type="Reactome" id="R-HSA-173623">
    <property type="pathway name" value="Classical antibody-mediated complement activation"/>
</dbReference>
<dbReference type="Reactome" id="R-HSA-198933">
    <property type="pathway name" value="Immunoregulatory interactions between a Lymphoid and a non-Lymphoid cell"/>
</dbReference>
<dbReference type="Reactome" id="R-HSA-202733">
    <property type="pathway name" value="Cell surface interactions at the vascular wall"/>
</dbReference>
<dbReference type="Reactome" id="R-HSA-2029481">
    <property type="pathway name" value="FCGR activation"/>
</dbReference>
<dbReference type="Reactome" id="R-HSA-2029482">
    <property type="pathway name" value="Regulation of actin dynamics for phagocytic cup formation"/>
</dbReference>
<dbReference type="Reactome" id="R-HSA-2029485">
    <property type="pathway name" value="Role of phospholipids in phagocytosis"/>
</dbReference>
<dbReference type="Reactome" id="R-HSA-2168880">
    <property type="pathway name" value="Scavenging of heme from plasma"/>
</dbReference>
<dbReference type="Reactome" id="R-HSA-2454202">
    <property type="pathway name" value="Fc epsilon receptor (FCERI) signaling"/>
</dbReference>
<dbReference type="Reactome" id="R-HSA-2730905">
    <property type="pathway name" value="Role of LAT2/NTAL/LAB on calcium mobilization"/>
</dbReference>
<dbReference type="Reactome" id="R-HSA-2871796">
    <property type="pathway name" value="FCERI mediated MAPK activation"/>
</dbReference>
<dbReference type="Reactome" id="R-HSA-2871809">
    <property type="pathway name" value="FCERI mediated Ca+2 mobilization"/>
</dbReference>
<dbReference type="Reactome" id="R-HSA-2871837">
    <property type="pathway name" value="FCERI mediated NF-kB activation"/>
</dbReference>
<dbReference type="Reactome" id="R-HSA-5690714">
    <property type="pathway name" value="CD22 mediated BCR regulation"/>
</dbReference>
<dbReference type="Reactome" id="R-HSA-9664323">
    <property type="pathway name" value="FCGR3A-mediated IL10 synthesis"/>
</dbReference>
<dbReference type="Reactome" id="R-HSA-9664422">
    <property type="pathway name" value="FCGR3A-mediated phagocytosis"/>
</dbReference>
<dbReference type="Reactome" id="R-HSA-9679191">
    <property type="pathway name" value="Potential therapeutics for SARS"/>
</dbReference>
<dbReference type="Reactome" id="R-HSA-977606">
    <property type="pathway name" value="Regulation of Complement cascade"/>
</dbReference>
<dbReference type="Reactome" id="R-HSA-983695">
    <property type="pathway name" value="Antigen activates B Cell Receptor (BCR) leading to generation of second messengers"/>
</dbReference>
<dbReference type="SignaLink" id="P06312"/>
<dbReference type="ChiTaRS" id="IGKV4-1">
    <property type="organism name" value="human"/>
</dbReference>
<dbReference type="EvolutionaryTrace" id="P06312"/>
<dbReference type="Pharos" id="P06312">
    <property type="development level" value="Tdark"/>
</dbReference>
<dbReference type="PRO" id="PR:P06312"/>
<dbReference type="Proteomes" id="UP000005640">
    <property type="component" value="Chromosome 2"/>
</dbReference>
<dbReference type="RNAct" id="P06312">
    <property type="molecule type" value="protein"/>
</dbReference>
<dbReference type="Bgee" id="ENSG00000211598">
    <property type="expression patterns" value="Expressed in rectum and 122 other cell types or tissues"/>
</dbReference>
<dbReference type="GO" id="GO:0072562">
    <property type="term" value="C:blood microparticle"/>
    <property type="evidence" value="ECO:0007005"/>
    <property type="project" value="UniProtKB"/>
</dbReference>
<dbReference type="GO" id="GO:0005576">
    <property type="term" value="C:extracellular region"/>
    <property type="evidence" value="ECO:0000304"/>
    <property type="project" value="Reactome"/>
</dbReference>
<dbReference type="GO" id="GO:0019814">
    <property type="term" value="C:immunoglobulin complex"/>
    <property type="evidence" value="ECO:0000318"/>
    <property type="project" value="GO_Central"/>
</dbReference>
<dbReference type="GO" id="GO:0005886">
    <property type="term" value="C:plasma membrane"/>
    <property type="evidence" value="ECO:0000304"/>
    <property type="project" value="Reactome"/>
</dbReference>
<dbReference type="GO" id="GO:0003823">
    <property type="term" value="F:antigen binding"/>
    <property type="evidence" value="ECO:0000303"/>
    <property type="project" value="UniProtKB"/>
</dbReference>
<dbReference type="GO" id="GO:0002250">
    <property type="term" value="P:adaptive immune response"/>
    <property type="evidence" value="ECO:0007669"/>
    <property type="project" value="UniProtKB-KW"/>
</dbReference>
<dbReference type="GO" id="GO:0006955">
    <property type="term" value="P:immune response"/>
    <property type="evidence" value="ECO:0000318"/>
    <property type="project" value="GO_Central"/>
</dbReference>
<dbReference type="CDD" id="cd04980">
    <property type="entry name" value="IgV_L_kappa"/>
    <property type="match status" value="1"/>
</dbReference>
<dbReference type="FunFam" id="2.60.40.10:FF:001378">
    <property type="entry name" value="Immunoglobulin kappa variable 4-1"/>
    <property type="match status" value="1"/>
</dbReference>
<dbReference type="Gene3D" id="2.60.40.10">
    <property type="entry name" value="Immunoglobulins"/>
    <property type="match status" value="1"/>
</dbReference>
<dbReference type="InterPro" id="IPR007110">
    <property type="entry name" value="Ig-like_dom"/>
</dbReference>
<dbReference type="InterPro" id="IPR036179">
    <property type="entry name" value="Ig-like_dom_sf"/>
</dbReference>
<dbReference type="InterPro" id="IPR013783">
    <property type="entry name" value="Ig-like_fold"/>
</dbReference>
<dbReference type="InterPro" id="IPR003599">
    <property type="entry name" value="Ig_sub"/>
</dbReference>
<dbReference type="InterPro" id="IPR013106">
    <property type="entry name" value="Ig_V-set"/>
</dbReference>
<dbReference type="InterPro" id="IPR050150">
    <property type="entry name" value="IgV_Light_Chain"/>
</dbReference>
<dbReference type="PANTHER" id="PTHR23267">
    <property type="entry name" value="IMMUNOGLOBULIN LIGHT CHAIN"/>
    <property type="match status" value="1"/>
</dbReference>
<dbReference type="Pfam" id="PF07686">
    <property type="entry name" value="V-set"/>
    <property type="match status" value="1"/>
</dbReference>
<dbReference type="SMART" id="SM00409">
    <property type="entry name" value="IG"/>
    <property type="match status" value="1"/>
</dbReference>
<dbReference type="SMART" id="SM00406">
    <property type="entry name" value="IGv"/>
    <property type="match status" value="1"/>
</dbReference>
<dbReference type="SUPFAM" id="SSF48726">
    <property type="entry name" value="Immunoglobulin"/>
    <property type="match status" value="1"/>
</dbReference>
<dbReference type="PROSITE" id="PS50835">
    <property type="entry name" value="IG_LIKE"/>
    <property type="match status" value="1"/>
</dbReference>
<proteinExistence type="evidence at protein level"/>
<name>KV401_HUMAN</name>
<reference key="1">
    <citation type="journal article" date="1985" name="Nucleic Acids Res.">
        <title>Subgroup IV of human immunoglobulin K light chains is encoded by a single germline gene.</title>
        <authorList>
            <person name="Klobeck H.G."/>
            <person name="Bornkamm G.W."/>
            <person name="Combriato G."/>
            <person name="Mocikat R."/>
            <person name="Pohlenz H.D."/>
            <person name="Zachau H.G."/>
        </authorList>
    </citation>
    <scope>NUCLEOTIDE SEQUENCE [GENOMIC DNA]</scope>
</reference>
<reference key="2">
    <citation type="journal article" date="1985" name="Nucleic Acids Res.">
        <title>Detection of a unique human V kappa IV germline gene by a cloned cDNA probe.</title>
        <authorList>
            <person name="Marsh P."/>
            <person name="Mills F."/>
            <person name="Gould H."/>
        </authorList>
    </citation>
    <scope>NUCLEOTIDE SEQUENCE [MRNA]</scope>
</reference>
<reference key="3">
    <citation type="submission" date="1986-10" db="EMBL/GenBank/DDBJ databases">
        <authorList>
            <person name="Marsh P."/>
        </authorList>
    </citation>
    <scope>SEQUENCE REVISION TO 76</scope>
</reference>
<reference key="4">
    <citation type="journal article" date="2005" name="Nature">
        <title>Generation and annotation of the DNA sequences of human chromosomes 2 and 4.</title>
        <authorList>
            <person name="Hillier L.W."/>
            <person name="Graves T.A."/>
            <person name="Fulton R.S."/>
            <person name="Fulton L.A."/>
            <person name="Pepin K.H."/>
            <person name="Minx P."/>
            <person name="Wagner-McPherson C."/>
            <person name="Layman D."/>
            <person name="Wylie K."/>
            <person name="Sekhon M."/>
            <person name="Becker M.C."/>
            <person name="Fewell G.A."/>
            <person name="Delehaunty K.D."/>
            <person name="Miner T.L."/>
            <person name="Nash W.E."/>
            <person name="Kremitzki C."/>
            <person name="Oddy L."/>
            <person name="Du H."/>
            <person name="Sun H."/>
            <person name="Bradshaw-Cordum H."/>
            <person name="Ali J."/>
            <person name="Carter J."/>
            <person name="Cordes M."/>
            <person name="Harris A."/>
            <person name="Isak A."/>
            <person name="van Brunt A."/>
            <person name="Nguyen C."/>
            <person name="Du F."/>
            <person name="Courtney L."/>
            <person name="Kalicki J."/>
            <person name="Ozersky P."/>
            <person name="Abbott S."/>
            <person name="Armstrong J."/>
            <person name="Belter E.A."/>
            <person name="Caruso L."/>
            <person name="Cedroni M."/>
            <person name="Cotton M."/>
            <person name="Davidson T."/>
            <person name="Desai A."/>
            <person name="Elliott G."/>
            <person name="Erb T."/>
            <person name="Fronick C."/>
            <person name="Gaige T."/>
            <person name="Haakenson W."/>
            <person name="Haglund K."/>
            <person name="Holmes A."/>
            <person name="Harkins R."/>
            <person name="Kim K."/>
            <person name="Kruchowski S.S."/>
            <person name="Strong C.M."/>
            <person name="Grewal N."/>
            <person name="Goyea E."/>
            <person name="Hou S."/>
            <person name="Levy A."/>
            <person name="Martinka S."/>
            <person name="Mead K."/>
            <person name="McLellan M.D."/>
            <person name="Meyer R."/>
            <person name="Randall-Maher J."/>
            <person name="Tomlinson C."/>
            <person name="Dauphin-Kohlberg S."/>
            <person name="Kozlowicz-Reilly A."/>
            <person name="Shah N."/>
            <person name="Swearengen-Shahid S."/>
            <person name="Snider J."/>
            <person name="Strong J.T."/>
            <person name="Thompson J."/>
            <person name="Yoakum M."/>
            <person name="Leonard S."/>
            <person name="Pearman C."/>
            <person name="Trani L."/>
            <person name="Radionenko M."/>
            <person name="Waligorski J.E."/>
            <person name="Wang C."/>
            <person name="Rock S.M."/>
            <person name="Tin-Wollam A.-M."/>
            <person name="Maupin R."/>
            <person name="Latreille P."/>
            <person name="Wendl M.C."/>
            <person name="Yang S.-P."/>
            <person name="Pohl C."/>
            <person name="Wallis J.W."/>
            <person name="Spieth J."/>
            <person name="Bieri T.A."/>
            <person name="Berkowicz N."/>
            <person name="Nelson J.O."/>
            <person name="Osborne J."/>
            <person name="Ding L."/>
            <person name="Meyer R."/>
            <person name="Sabo A."/>
            <person name="Shotland Y."/>
            <person name="Sinha P."/>
            <person name="Wohldmann P.E."/>
            <person name="Cook L.L."/>
            <person name="Hickenbotham M.T."/>
            <person name="Eldred J."/>
            <person name="Williams D."/>
            <person name="Jones T.A."/>
            <person name="She X."/>
            <person name="Ciccarelli F.D."/>
            <person name="Izaurralde E."/>
            <person name="Taylor J."/>
            <person name="Schmutz J."/>
            <person name="Myers R.M."/>
            <person name="Cox D.R."/>
            <person name="Huang X."/>
            <person name="McPherson J.D."/>
            <person name="Mardis E.R."/>
            <person name="Clifton S.W."/>
            <person name="Warren W.C."/>
            <person name="Chinwalla A.T."/>
            <person name="Eddy S.R."/>
            <person name="Marra M.A."/>
            <person name="Ovcharenko I."/>
            <person name="Furey T.S."/>
            <person name="Miller W."/>
            <person name="Eichler E.E."/>
            <person name="Bork P."/>
            <person name="Suyama M."/>
            <person name="Torrents D."/>
            <person name="Waterston R.H."/>
            <person name="Wilson R.K."/>
        </authorList>
    </citation>
    <scope>NUCLEOTIDE SEQUENCE [LARGE SCALE GENOMIC DNA] (IMGT ALLELE IGKV4-1*01)</scope>
</reference>
<reference key="5">
    <citation type="journal article" date="1975" name="Hoppe-Seyler's Z. Physiol. Chem.">
        <title>The primary structure of a monoclonic immunoglobulin-L-chain of subgroup IV of the kappa type (Bence-Jones protein Len).</title>
        <authorList>
            <person name="Schneider M."/>
            <person name="Hilschmann N."/>
        </authorList>
    </citation>
    <scope>PROTEIN SEQUENCE OF 21-121</scope>
</reference>
<reference key="6">
    <citation type="submission" date="1996-08" db="UniProtKB">
        <authorList>
            <person name="Salomon A."/>
        </authorList>
    </citation>
    <scope>SEQUENCE REVISION TO 29</scope>
</reference>
<reference evidence="11" key="7">
    <citation type="journal article" date="1998" name="Biochem. Biophys. Res. Commun.">
        <title>Extended analysis of AL-amyloid protein from abdominal wall subcutaneous fat biopsy: kappa IV immunoglobulin light chain.</title>
        <authorList>
            <person name="Olsen K.E."/>
            <person name="Sletten K."/>
            <person name="Westermark P."/>
        </authorList>
    </citation>
    <scope>PROTEIN SEQUENCE OF 21-121</scope>
    <source>
        <tissue evidence="4">Abdominal adipose tissue</tissue>
    </source>
</reference>
<reference key="8">
    <citation type="journal article" date="2001" name="Exp. Clin. Immunogenet.">
        <title>Nomenclature of the human immunoglobulin kappa (IGK) genes.</title>
        <authorList>
            <person name="Lefranc M.P."/>
        </authorList>
    </citation>
    <scope>NOMENCLATURE</scope>
</reference>
<reference key="9">
    <citation type="book" date="2001" name="The Immunoglobulin FactsBook.">
        <title>The Immunoglobulin FactsBook.</title>
        <editorList>
            <person name="Lefranc M.P."/>
            <person name="Lefranc G."/>
        </editorList>
        <authorList>
            <person name="Lefranc M.P."/>
            <person name="Lefranc G."/>
        </authorList>
    </citation>
    <scope>NOMENCLATURE</scope>
</reference>
<reference key="10">
    <citation type="journal article" date="2007" name="Annu. Rev. Genet.">
        <title>Immunoglobulin somatic hypermutation.</title>
        <authorList>
            <person name="Teng G."/>
            <person name="Papavasiliou F.N."/>
        </authorList>
    </citation>
    <scope>REVIEW ON SOMATIC HYPERMUTATION</scope>
</reference>
<reference key="11">
    <citation type="journal article" date="2010" name="J. Allergy Clin. Immunol.">
        <title>Structure and function of immunoglobulins.</title>
        <authorList>
            <person name="Schroeder H.W. Jr."/>
            <person name="Cavacini L."/>
        </authorList>
    </citation>
    <scope>REVIEW ON IMMUNOGLOBULINS</scope>
</reference>
<reference key="12">
    <citation type="journal article" date="2012" name="Nat. Rev. Immunol.">
        <title>Molecular programming of B cell memory.</title>
        <authorList>
            <person name="McHeyzer-Williams M."/>
            <person name="Okitsu S."/>
            <person name="Wang N."/>
            <person name="McHeyzer-Williams L."/>
        </authorList>
    </citation>
    <scope>REVIEW ON FUNCTION</scope>
</reference>
<reference key="13">
    <citation type="journal article" date="2014" name="Front. Immunol.">
        <title>Immunoglobulin and T Cell Receptor Genes: IMGT((R)) and the Birth and Rise of Immunoinformatics.</title>
        <authorList>
            <person name="Lefranc M.P."/>
        </authorList>
    </citation>
    <scope>NOMENCLATURE</scope>
</reference>
<reference key="14">
    <citation type="journal article" date="2014" name="J. Proteomics">
        <title>An enzyme assisted RP-RPLC approach for in-depth analysis of human liver phosphoproteome.</title>
        <authorList>
            <person name="Bian Y."/>
            <person name="Song C."/>
            <person name="Cheng K."/>
            <person name="Dong M."/>
            <person name="Wang F."/>
            <person name="Huang J."/>
            <person name="Sun D."/>
            <person name="Wang L."/>
            <person name="Ye M."/>
            <person name="Zou H."/>
        </authorList>
    </citation>
    <scope>IDENTIFICATION BY MASS SPECTROMETRY [LARGE SCALE ANALYSIS]</scope>
    <source>
        <tissue>Liver</tissue>
    </source>
</reference>
<sequence length="121" mass="13380">MVLQTQVFISLLLWISGAYGDIVMTQSPDSLAVSLGERATINCKSSQSVLYSSNNKNYLAWYQQKPGQPPKLLIYWASTRESGVPDRFSGSGSGTDFTLTISSLQAEDVAVYYCQQYYSTP</sequence>
<comment type="function">
    <text evidence="6 7 8 9">V segment of the variable domain of immunoglobulins light chain that participates in the antigen recognition (PubMed:24600447). Immunoglobulins, also known as antibodies, are membrane-bound or secreted glycoproteins produced by B lymphocytes. In the recognition phase of humoral immunity, the membrane-bound immunoglobulins serve as receptors which, upon binding of a specific antigen, trigger the clonal expansion and differentiation of B lymphocytes into immunoglobulins-secreting plasma cells. Secreted immunoglobulins mediate the effector phase of humoral immunity, which results in the elimination of bound antigens (PubMed:20176268, PubMed:22158414). The antigen binding site is formed by the variable domain of one heavy chain, together with that of its associated light chain. Thus, each immunoglobulin has two antigen binding sites with remarkable affinity for a particular antigen. The variable domains are assembled by a process called V-(D)-J rearrangement and can then be subjected to somatic hypermutations which, after exposure to antigen and selection, allow affinity maturation for a particular antigen (PubMed:17576170, PubMed:20176268).</text>
</comment>
<comment type="subunit">
    <text evidence="7">Immunoglobulins are composed of two identical heavy chains and two identical light chains; disulfide-linked.</text>
</comment>
<comment type="subcellular location">
    <subcellularLocation>
        <location evidence="7 8">Secreted</location>
    </subcellularLocation>
    <subcellularLocation>
        <location evidence="7 8">Cell membrane</location>
    </subcellularLocation>
</comment>
<comment type="polymorphism">
    <text evidence="11">There are several alleles. The sequence shown is that of IMGT allele IGKV4-1*01.</text>
</comment>
<comment type="caution">
    <text evidence="11">For an example of a full-length immunoglobulin kappa light chain see AC P0DOX7.</text>
</comment>
<comment type="sequence caution" evidence="11">
    <conflict type="miscellaneous discrepancy">
        <sequence resource="EMBL-CDS" id="CAA26733"/>
    </conflict>
    <text>Chimeric DNA corresponding to regions V and J of immunoglobulin kappa light chain.</text>
</comment>
<comment type="sequence caution" evidence="11">
    <conflict type="miscellaneous discrepancy">
        <sequence resource="EMBL-CDS" id="CAA77317"/>
    </conflict>
    <text>Chimeric DNA corresponding to regions V and J of immunoglobulin kappa light chain.</text>
</comment>
<comment type="sequence caution" evidence="11">
    <conflict type="erroneous gene model prediction">
        <sequence resource="EMBL-CDS" id="CAA77318"/>
    </conflict>
</comment>
<gene>
    <name evidence="5 10" type="primary">IGKV4-1</name>
</gene>
<evidence type="ECO:0000250" key="1">
    <source>
        <dbReference type="UniProtKB" id="P01602"/>
    </source>
</evidence>
<evidence type="ECO:0000255" key="2">
    <source>
        <dbReference type="PROSITE-ProRule" id="PRU00114"/>
    </source>
</evidence>
<evidence type="ECO:0000269" key="3">
    <source>
    </source>
</evidence>
<evidence type="ECO:0000269" key="4">
    <source>
    </source>
</evidence>
<evidence type="ECO:0000303" key="5">
    <source>
    </source>
</evidence>
<evidence type="ECO:0000303" key="6">
    <source>
    </source>
</evidence>
<evidence type="ECO:0000303" key="7">
    <source>
    </source>
</evidence>
<evidence type="ECO:0000303" key="8">
    <source>
    </source>
</evidence>
<evidence type="ECO:0000303" key="9">
    <source>
    </source>
</evidence>
<evidence type="ECO:0000303" key="10">
    <source ref="9"/>
</evidence>
<evidence type="ECO:0000305" key="11"/>
<evidence type="ECO:0000305" key="12">
    <source>
    </source>
</evidence>
<evidence type="ECO:0000305" key="13">
    <source>
    </source>
</evidence>
<evidence type="ECO:0000305" key="14">
    <source>
    </source>
</evidence>
<evidence type="ECO:0007829" key="15">
    <source>
        <dbReference type="PDB" id="1EEQ"/>
    </source>
</evidence>
<feature type="signal peptide" evidence="3 4">
    <location>
        <begin position="1"/>
        <end position="20"/>
    </location>
</feature>
<feature type="chain" id="PRO_0000015181" description="Immunoglobulin kappa variable 4-1" evidence="3 4">
    <location>
        <begin position="21"/>
        <end position="121"/>
    </location>
</feature>
<feature type="domain" description="Ig-like" evidence="2">
    <location>
        <begin position="21"/>
        <end position="121" status="greater than"/>
    </location>
</feature>
<feature type="region of interest" description="Framework-1" evidence="1">
    <location>
        <begin position="21"/>
        <end position="43"/>
    </location>
</feature>
<feature type="region of interest" description="Complementarity-determining-1" evidence="1">
    <location>
        <begin position="44"/>
        <end position="60"/>
    </location>
</feature>
<feature type="region of interest" description="Framework-2" evidence="1">
    <location>
        <begin position="61"/>
        <end position="75"/>
    </location>
</feature>
<feature type="region of interest" description="Complementarity-determining-2" evidence="1">
    <location>
        <begin position="76"/>
        <end position="82"/>
    </location>
</feature>
<feature type="region of interest" description="Framework-3" evidence="1">
    <location>
        <begin position="83"/>
        <end position="114"/>
    </location>
</feature>
<feature type="region of interest" description="Complementarity-determining-3" evidence="1">
    <location>
        <begin position="115"/>
        <end position="121" status="greater than"/>
    </location>
</feature>
<feature type="disulfide bond" evidence="2">
    <location>
        <begin position="43"/>
        <end position="114"/>
    </location>
</feature>
<feature type="sequence conflict" description="In Ref. 7; AA sequence." evidence="11" ref="7">
    <original>A</original>
    <variation>V</variation>
    <location>
        <position position="32"/>
    </location>
</feature>
<feature type="sequence conflict" description="In Ref. 7; AA sequence." evidence="11" ref="7">
    <original>K</original>
    <variation>R</variation>
    <location>
        <position position="44"/>
    </location>
</feature>
<feature type="sequence conflict" description="In Ref. 2; CAA26733." evidence="11" ref="2">
    <original>V</original>
    <variation>I</variation>
    <location>
        <position position="49"/>
    </location>
</feature>
<feature type="sequence conflict" description="In Ref. 2; CAA26733." evidence="11" ref="2">
    <original>N</original>
    <variation>D</variation>
    <location>
        <position position="54"/>
    </location>
</feature>
<feature type="sequence conflict" description="In Ref. 5; AA sequence." evidence="11" ref="5">
    <original>N</original>
    <variation>S</variation>
    <location>
        <position position="55"/>
    </location>
</feature>
<feature type="sequence conflict" description="In Ref. 7; AA sequence." evidence="11" ref="7">
    <original>P</original>
    <variation>A</variation>
    <location>
        <position position="69"/>
    </location>
</feature>
<feature type="sequence conflict" description="In Ref. 7; AA sequence." evidence="11" ref="7">
    <original>IY</original>
    <variation>FS</variation>
    <location>
        <begin position="74"/>
        <end position="75"/>
    </location>
</feature>
<feature type="sequence conflict" description="In Ref. 7; AA sequence." evidence="11" ref="7">
    <original>SS</original>
    <variation>PG</variation>
    <location>
        <begin position="102"/>
        <end position="103"/>
    </location>
</feature>
<feature type="sequence conflict" description="In Ref. 1; CAA77317." evidence="11" ref="1">
    <original>YST</original>
    <variation>DTI</variation>
    <location>
        <begin position="118"/>
        <end position="120"/>
    </location>
</feature>
<feature type="sequence conflict" description="In Ref. 2; CAA26733." evidence="11" ref="2">
    <original>ST</original>
    <variation>NL</variation>
    <location>
        <begin position="119"/>
        <end position="120"/>
    </location>
</feature>
<feature type="sequence conflict" description="In Ref. 7; AA sequence." evidence="11" ref="7">
    <original>ST</original>
    <variation>RI</variation>
    <location>
        <begin position="119"/>
        <end position="120"/>
    </location>
</feature>
<feature type="non-terminal residue">
    <location>
        <position position="121"/>
    </location>
</feature>
<feature type="strand" evidence="15">
    <location>
        <begin position="24"/>
        <end position="27"/>
    </location>
</feature>
<feature type="strand" evidence="15">
    <location>
        <begin position="29"/>
        <end position="33"/>
    </location>
</feature>
<feature type="strand" evidence="15">
    <location>
        <begin position="39"/>
        <end position="47"/>
    </location>
</feature>
<feature type="turn" evidence="15">
    <location>
        <begin position="52"/>
        <end position="55"/>
    </location>
</feature>
<feature type="strand" evidence="15">
    <location>
        <begin position="59"/>
        <end position="64"/>
    </location>
</feature>
<feature type="strand" evidence="15">
    <location>
        <begin position="71"/>
        <end position="75"/>
    </location>
</feature>
<feature type="turn" evidence="15">
    <location>
        <begin position="76"/>
        <end position="78"/>
    </location>
</feature>
<feature type="strand" evidence="15">
    <location>
        <begin position="88"/>
        <end position="93"/>
    </location>
</feature>
<feature type="strand" evidence="15">
    <location>
        <begin position="96"/>
        <end position="103"/>
    </location>
</feature>
<feature type="helix" evidence="15">
    <location>
        <begin position="106"/>
        <end position="108"/>
    </location>
</feature>
<feature type="strand" evidence="15">
    <location>
        <begin position="110"/>
        <end position="116"/>
    </location>
</feature>
<feature type="strand" evidence="15">
    <location>
        <begin position="118"/>
        <end position="121"/>
    </location>
</feature>
<keyword id="KW-0002">3D-structure</keyword>
<keyword id="KW-1064">Adaptive immunity</keyword>
<keyword id="KW-1003">Cell membrane</keyword>
<keyword id="KW-0903">Direct protein sequencing</keyword>
<keyword id="KW-1015">Disulfide bond</keyword>
<keyword id="KW-0391">Immunity</keyword>
<keyword id="KW-1280">Immunoglobulin</keyword>
<keyword id="KW-0393">Immunoglobulin domain</keyword>
<keyword id="KW-0472">Membrane</keyword>
<keyword id="KW-1267">Proteomics identification</keyword>
<keyword id="KW-1185">Reference proteome</keyword>
<keyword id="KW-0964">Secreted</keyword>
<keyword id="KW-0732">Signal</keyword>
<protein>
    <recommendedName>
        <fullName evidence="5 10">Immunoglobulin kappa variable 4-1</fullName>
    </recommendedName>
    <alternativeName>
        <fullName evidence="12">Ig kappa chain V-IV region B17</fullName>
    </alternativeName>
    <alternativeName>
        <fullName evidence="13">Ig kappa chain V-IV region JI</fullName>
    </alternativeName>
    <alternativeName>
        <fullName evidence="13">Ig kappa chain V-IV region Len</fullName>
    </alternativeName>
    <alternativeName>
        <fullName evidence="14">Ig kappa chain V-IV region STH</fullName>
    </alternativeName>
</protein>
<organism>
    <name type="scientific">Homo sapiens</name>
    <name type="common">Human</name>
    <dbReference type="NCBI Taxonomy" id="9606"/>
    <lineage>
        <taxon>Eukaryota</taxon>
        <taxon>Metazoa</taxon>
        <taxon>Chordata</taxon>
        <taxon>Craniata</taxon>
        <taxon>Vertebrata</taxon>
        <taxon>Euteleostomi</taxon>
        <taxon>Mammalia</taxon>
        <taxon>Eutheria</taxon>
        <taxon>Euarchontoglires</taxon>
        <taxon>Primates</taxon>
        <taxon>Haplorrhini</taxon>
        <taxon>Catarrhini</taxon>
        <taxon>Hominidae</taxon>
        <taxon>Homo</taxon>
    </lineage>
</organism>